<dbReference type="EC" id="4.3.3.6" evidence="1"/>
<dbReference type="EC" id="3.5.1.2" evidence="1"/>
<dbReference type="EMBL" id="CP000962">
    <property type="protein sequence ID" value="ACA55478.1"/>
    <property type="molecule type" value="Genomic_DNA"/>
</dbReference>
<dbReference type="SMR" id="B1KYX4"/>
<dbReference type="MEROPS" id="C26.A32"/>
<dbReference type="KEGG" id="cbl:CLK_2186"/>
<dbReference type="HOGENOM" id="CLU_069674_2_0_9"/>
<dbReference type="UniPathway" id="UPA00245"/>
<dbReference type="GO" id="GO:0005829">
    <property type="term" value="C:cytosol"/>
    <property type="evidence" value="ECO:0007669"/>
    <property type="project" value="TreeGrafter"/>
</dbReference>
<dbReference type="GO" id="GO:1903600">
    <property type="term" value="C:glutaminase complex"/>
    <property type="evidence" value="ECO:0007669"/>
    <property type="project" value="TreeGrafter"/>
</dbReference>
<dbReference type="GO" id="GO:0004359">
    <property type="term" value="F:glutaminase activity"/>
    <property type="evidence" value="ECO:0007669"/>
    <property type="project" value="UniProtKB-UniRule"/>
</dbReference>
<dbReference type="GO" id="GO:0036381">
    <property type="term" value="F:pyridoxal 5'-phosphate synthase (glutamine hydrolysing) activity"/>
    <property type="evidence" value="ECO:0007669"/>
    <property type="project" value="UniProtKB-UniRule"/>
</dbReference>
<dbReference type="GO" id="GO:0006543">
    <property type="term" value="P:glutamine catabolic process"/>
    <property type="evidence" value="ECO:0007669"/>
    <property type="project" value="UniProtKB-UniRule"/>
</dbReference>
<dbReference type="GO" id="GO:0042823">
    <property type="term" value="P:pyridoxal phosphate biosynthetic process"/>
    <property type="evidence" value="ECO:0007669"/>
    <property type="project" value="UniProtKB-UniRule"/>
</dbReference>
<dbReference type="GO" id="GO:0008614">
    <property type="term" value="P:pyridoxine metabolic process"/>
    <property type="evidence" value="ECO:0007669"/>
    <property type="project" value="TreeGrafter"/>
</dbReference>
<dbReference type="CDD" id="cd01749">
    <property type="entry name" value="GATase1_PB"/>
    <property type="match status" value="1"/>
</dbReference>
<dbReference type="FunFam" id="3.40.50.880:FF:000010">
    <property type="entry name" value="uncharacterized protein LOC100176842 isoform X2"/>
    <property type="match status" value="1"/>
</dbReference>
<dbReference type="Gene3D" id="3.40.50.880">
    <property type="match status" value="1"/>
</dbReference>
<dbReference type="HAMAP" id="MF_01615">
    <property type="entry name" value="PdxT"/>
    <property type="match status" value="1"/>
</dbReference>
<dbReference type="InterPro" id="IPR029062">
    <property type="entry name" value="Class_I_gatase-like"/>
</dbReference>
<dbReference type="InterPro" id="IPR002161">
    <property type="entry name" value="PdxT/SNO"/>
</dbReference>
<dbReference type="InterPro" id="IPR021196">
    <property type="entry name" value="PdxT/SNO_CS"/>
</dbReference>
<dbReference type="NCBIfam" id="TIGR03800">
    <property type="entry name" value="PLP_synth_Pdx2"/>
    <property type="match status" value="1"/>
</dbReference>
<dbReference type="PANTHER" id="PTHR31559">
    <property type="entry name" value="PYRIDOXAL 5'-PHOSPHATE SYNTHASE SUBUNIT SNO"/>
    <property type="match status" value="1"/>
</dbReference>
<dbReference type="PANTHER" id="PTHR31559:SF0">
    <property type="entry name" value="PYRIDOXAL 5'-PHOSPHATE SYNTHASE SUBUNIT SNO1-RELATED"/>
    <property type="match status" value="1"/>
</dbReference>
<dbReference type="Pfam" id="PF01174">
    <property type="entry name" value="SNO"/>
    <property type="match status" value="1"/>
</dbReference>
<dbReference type="PIRSF" id="PIRSF005639">
    <property type="entry name" value="Glut_amidoT_SNO"/>
    <property type="match status" value="1"/>
</dbReference>
<dbReference type="SUPFAM" id="SSF52317">
    <property type="entry name" value="Class I glutamine amidotransferase-like"/>
    <property type="match status" value="1"/>
</dbReference>
<dbReference type="PROSITE" id="PS01236">
    <property type="entry name" value="PDXT_SNO_1"/>
    <property type="match status" value="1"/>
</dbReference>
<dbReference type="PROSITE" id="PS51130">
    <property type="entry name" value="PDXT_SNO_2"/>
    <property type="match status" value="1"/>
</dbReference>
<comment type="function">
    <text evidence="1">Catalyzes the hydrolysis of glutamine to glutamate and ammonia as part of the biosynthesis of pyridoxal 5'-phosphate. The resulting ammonia molecule is channeled to the active site of PdxS.</text>
</comment>
<comment type="catalytic activity">
    <reaction evidence="1">
        <text>aldehydo-D-ribose 5-phosphate + D-glyceraldehyde 3-phosphate + L-glutamine = pyridoxal 5'-phosphate + L-glutamate + phosphate + 3 H2O + H(+)</text>
        <dbReference type="Rhea" id="RHEA:31507"/>
        <dbReference type="ChEBI" id="CHEBI:15377"/>
        <dbReference type="ChEBI" id="CHEBI:15378"/>
        <dbReference type="ChEBI" id="CHEBI:29985"/>
        <dbReference type="ChEBI" id="CHEBI:43474"/>
        <dbReference type="ChEBI" id="CHEBI:58273"/>
        <dbReference type="ChEBI" id="CHEBI:58359"/>
        <dbReference type="ChEBI" id="CHEBI:59776"/>
        <dbReference type="ChEBI" id="CHEBI:597326"/>
        <dbReference type="EC" id="4.3.3.6"/>
    </reaction>
</comment>
<comment type="catalytic activity">
    <reaction evidence="1">
        <text>L-glutamine + H2O = L-glutamate + NH4(+)</text>
        <dbReference type="Rhea" id="RHEA:15889"/>
        <dbReference type="ChEBI" id="CHEBI:15377"/>
        <dbReference type="ChEBI" id="CHEBI:28938"/>
        <dbReference type="ChEBI" id="CHEBI:29985"/>
        <dbReference type="ChEBI" id="CHEBI:58359"/>
        <dbReference type="EC" id="3.5.1.2"/>
    </reaction>
</comment>
<comment type="pathway">
    <text evidence="1">Cofactor biosynthesis; pyridoxal 5'-phosphate biosynthesis.</text>
</comment>
<comment type="subunit">
    <text evidence="1">In the presence of PdxS, forms a dodecamer of heterodimers. Only shows activity in the heterodimer.</text>
</comment>
<comment type="similarity">
    <text evidence="1">Belongs to the glutaminase PdxT/SNO family.</text>
</comment>
<sequence>MIRVGVLDLQGSVVEHMKILEKIDNVEPVRVKYKEDLDNIQGIILPGGESTTLGKLLKDFHIHDTLKEKIENGLPVWGTCAGMILLAKDIQGQEESYFKVIDIEVKRNAYGSQLNSFSIEEMLEDIDKEPIELVFIRAPYITTVGPNVTILKRVRKNIVAAKEKNVLVTSFHPELTEDTRFHRYFIDKFIKNK</sequence>
<accession>B1KYX4</accession>
<organism>
    <name type="scientific">Clostridium botulinum (strain Loch Maree / Type A3)</name>
    <dbReference type="NCBI Taxonomy" id="498214"/>
    <lineage>
        <taxon>Bacteria</taxon>
        <taxon>Bacillati</taxon>
        <taxon>Bacillota</taxon>
        <taxon>Clostridia</taxon>
        <taxon>Eubacteriales</taxon>
        <taxon>Clostridiaceae</taxon>
        <taxon>Clostridium</taxon>
    </lineage>
</organism>
<keyword id="KW-0315">Glutamine amidotransferase</keyword>
<keyword id="KW-0378">Hydrolase</keyword>
<keyword id="KW-0456">Lyase</keyword>
<keyword id="KW-0663">Pyridoxal phosphate</keyword>
<name>PDXT_CLOBM</name>
<evidence type="ECO:0000255" key="1">
    <source>
        <dbReference type="HAMAP-Rule" id="MF_01615"/>
    </source>
</evidence>
<protein>
    <recommendedName>
        <fullName evidence="1">Pyridoxal 5'-phosphate synthase subunit PdxT</fullName>
        <ecNumber evidence="1">4.3.3.6</ecNumber>
    </recommendedName>
    <alternativeName>
        <fullName evidence="1">Pdx2</fullName>
    </alternativeName>
    <alternativeName>
        <fullName evidence="1">Pyridoxal 5'-phosphate synthase glutaminase subunit</fullName>
        <ecNumber evidence="1">3.5.1.2</ecNumber>
    </alternativeName>
</protein>
<reference key="1">
    <citation type="journal article" date="2007" name="PLoS ONE">
        <title>Analysis of the neurotoxin complex genes in Clostridium botulinum A1-A4 and B1 strains: BoNT/A3, /Ba4 and /B1 clusters are located within plasmids.</title>
        <authorList>
            <person name="Smith T.J."/>
            <person name="Hill K.K."/>
            <person name="Foley B.T."/>
            <person name="Detter J.C."/>
            <person name="Munk A.C."/>
            <person name="Bruce D.C."/>
            <person name="Doggett N.A."/>
            <person name="Smith L.A."/>
            <person name="Marks J.D."/>
            <person name="Xie G."/>
            <person name="Brettin T.S."/>
        </authorList>
    </citation>
    <scope>NUCLEOTIDE SEQUENCE [LARGE SCALE GENOMIC DNA]</scope>
    <source>
        <strain>Loch Maree / Type A3</strain>
    </source>
</reference>
<proteinExistence type="inferred from homology"/>
<gene>
    <name evidence="1" type="primary">pdxT</name>
    <name type="ordered locus">CLK_2186</name>
</gene>
<feature type="chain" id="PRO_0000335570" description="Pyridoxal 5'-phosphate synthase subunit PdxT">
    <location>
        <begin position="1"/>
        <end position="193"/>
    </location>
</feature>
<feature type="active site" description="Nucleophile" evidence="1">
    <location>
        <position position="80"/>
    </location>
</feature>
<feature type="active site" description="Charge relay system" evidence="1">
    <location>
        <position position="172"/>
    </location>
</feature>
<feature type="active site" description="Charge relay system" evidence="1">
    <location>
        <position position="174"/>
    </location>
</feature>
<feature type="binding site" evidence="1">
    <location>
        <begin position="48"/>
        <end position="50"/>
    </location>
    <ligand>
        <name>L-glutamine</name>
        <dbReference type="ChEBI" id="CHEBI:58359"/>
    </ligand>
</feature>
<feature type="binding site" evidence="1">
    <location>
        <position position="107"/>
    </location>
    <ligand>
        <name>L-glutamine</name>
        <dbReference type="ChEBI" id="CHEBI:58359"/>
    </ligand>
</feature>
<feature type="binding site" evidence="1">
    <location>
        <begin position="136"/>
        <end position="137"/>
    </location>
    <ligand>
        <name>L-glutamine</name>
        <dbReference type="ChEBI" id="CHEBI:58359"/>
    </ligand>
</feature>